<protein>
    <recommendedName>
        <fullName evidence="4">Type III effector protein HopBF1</fullName>
    </recommendedName>
    <alternativeName>
        <fullName evidence="3">Eukaryotic-specific HSP90 protein kinase</fullName>
        <ecNumber evidence="2">2.7.1.-</ecNumber>
    </alternativeName>
    <alternativeName>
        <fullName evidence="4">Type III secretion system effector HopBF1</fullName>
        <shortName evidence="4">T3SS effector HopBF1</shortName>
    </alternativeName>
</protein>
<gene>
    <name evidence="3" type="primary">hopBF1</name>
    <name evidence="6" type="ORF">C5I_0127895</name>
</gene>
<comment type="function">
    <text evidence="2">Effector protein that targets and inactivates the plant molecular chaperone HSP90 during infection (PubMed:31522888). HopBF1 is recognized by HSP90 as a host client (PubMed:31522888). As a result, HopBF1 phosphorylates HSP90, leading to the inactivation of the HSP90 ATPase activity and chaperone function (PubMed:31522888). Phosphorylation of HSP90 prevents activation of immune receptors that trigger the hypersensitive response in plants (PubMed:31522888). HopBF1 is sufficient to cause severe disease symptoms in plants infected with P.syringae (PubMed:31522888). In vitro, can phosphorylate the recombinant yeast HSP82 (HSP90) on Ser-99, Triticum aestivum (wheat) HSP90 and human HSP 90-beta, but not the prokaryotic HSP90 orthologs, HtpG from E.coli and P.syringae (PubMed:31522888). Does not act on generic protein kinase substrates such as casein and myelin basic protein, as well as the yeast HSP70s and Bip chaperones (PubMed:31522888).</text>
</comment>
<comment type="catalytic activity">
    <reaction evidence="2">
        <text>L-seryl-[protein] + ATP = O-phospho-L-seryl-[protein] + ADP + H(+)</text>
        <dbReference type="Rhea" id="RHEA:17989"/>
        <dbReference type="Rhea" id="RHEA-COMP:9863"/>
        <dbReference type="Rhea" id="RHEA-COMP:11604"/>
        <dbReference type="ChEBI" id="CHEBI:15378"/>
        <dbReference type="ChEBI" id="CHEBI:29999"/>
        <dbReference type="ChEBI" id="CHEBI:30616"/>
        <dbReference type="ChEBI" id="CHEBI:83421"/>
        <dbReference type="ChEBI" id="CHEBI:456216"/>
    </reaction>
    <physiologicalReaction direction="left-to-right" evidence="2">
        <dbReference type="Rhea" id="RHEA:17990"/>
    </physiologicalReaction>
</comment>
<comment type="biophysicochemical properties">
    <kinetics>
        <KM evidence="2">3 uM for recombinant yeast HSP82 (HSP90)</KM>
    </kinetics>
</comment>
<comment type="subcellular location">
    <subcellularLocation>
        <location evidence="5">Secreted</location>
    </subcellularLocation>
    <subcellularLocation>
        <location evidence="5">Host cell</location>
    </subcellularLocation>
    <text evidence="5">Secreted via the type III secretion system (T3SS).</text>
</comment>
<comment type="domain">
    <text evidence="1">Adopts a minimal and atypical protein kinase fold.</text>
</comment>
<comment type="miscellaneous">
    <text evidence="5">HopBF1 is specific for eukaryotic HSP90, despite the fact that the target Ser is strictly conserved in prokaryotic homologs. This mechanism appears to have evolved to prevent phosphorylation and inactivation of the pathogen's own HSP90.</text>
</comment>
<comment type="similarity">
    <text evidence="4">Belongs to the HopBF1 family.</text>
</comment>
<evidence type="ECO:0000250" key="1">
    <source>
        <dbReference type="UniProtKB" id="A0A085GHR3"/>
    </source>
</evidence>
<evidence type="ECO:0000269" key="2">
    <source>
    </source>
</evidence>
<evidence type="ECO:0000303" key="3">
    <source>
    </source>
</evidence>
<evidence type="ECO:0000305" key="4"/>
<evidence type="ECO:0000305" key="5">
    <source>
    </source>
</evidence>
<evidence type="ECO:0000312" key="6">
    <source>
        <dbReference type="EMBL" id="KEZ70135.1"/>
    </source>
</evidence>
<accession>P0DXE7</accession>
<proteinExistence type="evidence at protein level"/>
<dbReference type="EC" id="2.7.1.-" evidence="2"/>
<dbReference type="EMBL" id="ACXZ01003238">
    <property type="protein sequence ID" value="KEZ70135.1"/>
    <property type="molecule type" value="Genomic_DNA"/>
</dbReference>
<dbReference type="SMR" id="P0DXE7"/>
<dbReference type="GO" id="GO:0005576">
    <property type="term" value="C:extracellular region"/>
    <property type="evidence" value="ECO:0007669"/>
    <property type="project" value="UniProtKB-SubCell"/>
</dbReference>
<dbReference type="GO" id="GO:0043657">
    <property type="term" value="C:host cell"/>
    <property type="evidence" value="ECO:0007669"/>
    <property type="project" value="UniProtKB-SubCell"/>
</dbReference>
<dbReference type="GO" id="GO:0005524">
    <property type="term" value="F:ATP binding"/>
    <property type="evidence" value="ECO:0007669"/>
    <property type="project" value="UniProtKB-KW"/>
</dbReference>
<dbReference type="GO" id="GO:0016301">
    <property type="term" value="F:kinase activity"/>
    <property type="evidence" value="ECO:0007669"/>
    <property type="project" value="UniProtKB-KW"/>
</dbReference>
<dbReference type="CDD" id="cd20900">
    <property type="entry name" value="HopBF1"/>
    <property type="match status" value="1"/>
</dbReference>
<dbReference type="InterPro" id="IPR054555">
    <property type="entry name" value="T3SS_HopBF1-like"/>
</dbReference>
<dbReference type="NCBIfam" id="NF035942">
    <property type="entry name" value="T3SS_eff_HopBF1"/>
    <property type="match status" value="1"/>
</dbReference>
<reference key="1">
    <citation type="journal article" date="2012" name="J. Bacteriol.">
        <title>Draft genome sequence of Pseudomonas syringae pathovar syringae strain FF5, causal agent of stem tip dieback disease on ornamental pear.</title>
        <authorList>
            <person name="Sohn K.H."/>
            <person name="Jones J.D."/>
            <person name="Studholme D.J."/>
        </authorList>
    </citation>
    <scope>NUCLEOTIDE SEQUENCE [LARGE SCALE GENOMIC DNA]</scope>
    <source>
        <strain>FF5</strain>
    </source>
</reference>
<reference key="2">
    <citation type="journal article" date="2019" name="Cell">
        <title>A Bacterial Effector Mimics a Host HSP90 Client to Undermine Immunity.</title>
        <authorList>
            <person name="Lopez V.A."/>
            <person name="Park B.C."/>
            <person name="Nowak D."/>
            <person name="Sreelatha A."/>
            <person name="Zembek P."/>
            <person name="Fernandez J."/>
            <person name="Servage K.A."/>
            <person name="Gradowski M."/>
            <person name="Hennig J."/>
            <person name="Tomchick D.R."/>
            <person name="Pawlowski K."/>
            <person name="Krzymowska M."/>
            <person name="Tagliabracci V.S."/>
        </authorList>
    </citation>
    <scope>FUNCTION</scope>
    <scope>CATALYTIC ACTIVITY</scope>
    <scope>BIOPHYSICOCHEMICAL PROPERTIES</scope>
    <scope>MUTAGENESIS OF LYS-41; GLU-74; VAL-88; ASP-154 AND ASP-169</scope>
    <scope>PROPOSED ACTIVE SITE</scope>
    <source>
        <strain>FF5</strain>
    </source>
</reference>
<keyword id="KW-0067">ATP-binding</keyword>
<keyword id="KW-0418">Kinase</keyword>
<keyword id="KW-0547">Nucleotide-binding</keyword>
<keyword id="KW-0964">Secreted</keyword>
<keyword id="KW-0808">Transferase</keyword>
<keyword id="KW-0843">Virulence</keyword>
<name>HPBF1_PSEF6</name>
<sequence length="201" mass="22478">MPIVSSAASIQRHPGIQDVAAPTELTSIPSVGEKLGSGSQKDVYHSRQDPRQCICLIRPDTTGIISGNEYAAKELKMTKHLKDLGFPVVDAYALVKYDNKVGIAKDYIHHALDSEDVIHNRKHIPTDMAFNKNVMKDCDEIISRLRTHSLHIEDLQFLIDGYGRVRINDPRDVIRSSPEKSIAKVRELRAIALNNLLDDSD</sequence>
<feature type="chain" id="PRO_0000461099" description="Type III effector protein HopBF1">
    <location>
        <begin position="1"/>
        <end position="201"/>
    </location>
</feature>
<feature type="active site" evidence="5">
    <location>
        <position position="154"/>
    </location>
</feature>
<feature type="binding site" evidence="1">
    <location>
        <position position="39"/>
    </location>
    <ligand>
        <name>ATP</name>
        <dbReference type="ChEBI" id="CHEBI:30616"/>
    </ligand>
</feature>
<feature type="binding site" evidence="1">
    <location>
        <position position="40"/>
    </location>
    <ligand>
        <name>ATP</name>
        <dbReference type="ChEBI" id="CHEBI:30616"/>
    </ligand>
</feature>
<feature type="binding site" evidence="1">
    <location>
        <position position="41"/>
    </location>
    <ligand>
        <name>ATP</name>
        <dbReference type="ChEBI" id="CHEBI:30616"/>
    </ligand>
</feature>
<feature type="binding site" evidence="1">
    <location>
        <position position="106"/>
    </location>
    <ligand>
        <name>ATP</name>
        <dbReference type="ChEBI" id="CHEBI:30616"/>
    </ligand>
</feature>
<feature type="binding site" evidence="1">
    <location>
        <position position="108"/>
    </location>
    <ligand>
        <name>ATP</name>
        <dbReference type="ChEBI" id="CHEBI:30616"/>
    </ligand>
</feature>
<feature type="binding site" evidence="1">
    <location>
        <position position="113"/>
    </location>
    <ligand>
        <name>ATP</name>
        <dbReference type="ChEBI" id="CHEBI:30616"/>
    </ligand>
</feature>
<feature type="binding site" evidence="1">
    <location>
        <position position="156"/>
    </location>
    <ligand>
        <name>ATP</name>
        <dbReference type="ChEBI" id="CHEBI:30616"/>
    </ligand>
</feature>
<feature type="mutagenesis site" description="Loss of kinase activity." evidence="2">
    <original>K</original>
    <variation>A</variation>
    <location>
        <position position="41"/>
    </location>
</feature>
<feature type="mutagenesis site" description="Significantly reduces kinase activity." evidence="2">
    <original>E</original>
    <variation>A</variation>
    <location>
        <position position="74"/>
    </location>
</feature>
<feature type="mutagenesis site" description="1000-fold decrease in catalytic efficiency." evidence="2">
    <original>V</original>
    <variation>D</variation>
    <location>
        <position position="88"/>
    </location>
</feature>
<feature type="mutagenesis site" description="Loss of kinase activity. Does not induce severe disease symptoms in plants." evidence="2">
    <original>D</original>
    <variation>A</variation>
    <location>
        <position position="154"/>
    </location>
</feature>
<feature type="mutagenesis site" description="Loss of kinase activity. Does not induce severe disease symptoms in plants." evidence="2">
    <original>D</original>
    <variation>A</variation>
    <location>
        <position position="169"/>
    </location>
</feature>
<organism>
    <name type="scientific">Pseudomonas syringae pv. syringae (strain FF5)</name>
    <dbReference type="NCBI Taxonomy" id="591153"/>
    <lineage>
        <taxon>Bacteria</taxon>
        <taxon>Pseudomonadati</taxon>
        <taxon>Pseudomonadota</taxon>
        <taxon>Gammaproteobacteria</taxon>
        <taxon>Pseudomonadales</taxon>
        <taxon>Pseudomonadaceae</taxon>
        <taxon>Pseudomonas</taxon>
        <taxon>Pseudomonas syringae</taxon>
    </lineage>
</organism>